<dbReference type="EMBL" id="CP000678">
    <property type="protein sequence ID" value="ABQ86911.1"/>
    <property type="molecule type" value="Genomic_DNA"/>
</dbReference>
<dbReference type="RefSeq" id="WP_004032463.1">
    <property type="nucleotide sequence ID" value="NZ_CP117965.1"/>
</dbReference>
<dbReference type="SMR" id="A5UL33"/>
<dbReference type="STRING" id="420247.Msm_0706"/>
<dbReference type="EnsemblBacteria" id="ABQ86911">
    <property type="protein sequence ID" value="ABQ86911"/>
    <property type="gene ID" value="Msm_0706"/>
</dbReference>
<dbReference type="KEGG" id="msi:Msm_0706"/>
<dbReference type="PATRIC" id="fig|420247.28.peg.703"/>
<dbReference type="eggNOG" id="arCOG04177">
    <property type="taxonomic scope" value="Archaea"/>
</dbReference>
<dbReference type="HOGENOM" id="CLU_181948_4_0_2"/>
<dbReference type="Proteomes" id="UP000001992">
    <property type="component" value="Chromosome"/>
</dbReference>
<dbReference type="GO" id="GO:1990904">
    <property type="term" value="C:ribonucleoprotein complex"/>
    <property type="evidence" value="ECO:0007669"/>
    <property type="project" value="UniProtKB-KW"/>
</dbReference>
<dbReference type="GO" id="GO:0005840">
    <property type="term" value="C:ribosome"/>
    <property type="evidence" value="ECO:0007669"/>
    <property type="project" value="UniProtKB-KW"/>
</dbReference>
<dbReference type="GO" id="GO:0003735">
    <property type="term" value="F:structural constituent of ribosome"/>
    <property type="evidence" value="ECO:0007669"/>
    <property type="project" value="InterPro"/>
</dbReference>
<dbReference type="GO" id="GO:0006412">
    <property type="term" value="P:translation"/>
    <property type="evidence" value="ECO:0007669"/>
    <property type="project" value="UniProtKB-UniRule"/>
</dbReference>
<dbReference type="FunFam" id="1.10.1620.10:FF:000001">
    <property type="entry name" value="60S ribosomal protein-like L39"/>
    <property type="match status" value="1"/>
</dbReference>
<dbReference type="Gene3D" id="1.10.1620.10">
    <property type="entry name" value="Ribosomal protein L39e"/>
    <property type="match status" value="1"/>
</dbReference>
<dbReference type="HAMAP" id="MF_00629">
    <property type="entry name" value="Ribosomal_eL39"/>
    <property type="match status" value="1"/>
</dbReference>
<dbReference type="InterPro" id="IPR000077">
    <property type="entry name" value="Ribosomal_eL39"/>
</dbReference>
<dbReference type="InterPro" id="IPR023626">
    <property type="entry name" value="Ribosomal_eL39_dom_sf"/>
</dbReference>
<dbReference type="NCBIfam" id="NF002316">
    <property type="entry name" value="PRK01242.1"/>
    <property type="match status" value="1"/>
</dbReference>
<dbReference type="Pfam" id="PF00832">
    <property type="entry name" value="Ribosomal_L39"/>
    <property type="match status" value="1"/>
</dbReference>
<dbReference type="SUPFAM" id="SSF48662">
    <property type="entry name" value="Ribosomal protein L39e"/>
    <property type="match status" value="1"/>
</dbReference>
<name>RL39_METS3</name>
<accession>A5UL33</accession>
<sequence length="51" mass="6342">MSRNKPLAKKLRMAKANKQNRRIPIWAYAKTNRKLRYRPKPRHWRRNSLKL</sequence>
<comment type="similarity">
    <text evidence="1">Belongs to the eukaryotic ribosomal protein eL39 family.</text>
</comment>
<proteinExistence type="inferred from homology"/>
<feature type="chain" id="PRO_1000051691" description="Large ribosomal subunit protein eL39">
    <location>
        <begin position="1"/>
        <end position="51"/>
    </location>
</feature>
<protein>
    <recommendedName>
        <fullName evidence="1">Large ribosomal subunit protein eL39</fullName>
    </recommendedName>
    <alternativeName>
        <fullName evidence="2">50S ribosomal protein L39e</fullName>
    </alternativeName>
</protein>
<reference key="1">
    <citation type="journal article" date="2007" name="Proc. Natl. Acad. Sci. U.S.A.">
        <title>Genomic and metabolic adaptations of Methanobrevibacter smithii to the human gut.</title>
        <authorList>
            <person name="Samuel B.S."/>
            <person name="Hansen E.E."/>
            <person name="Manchester J.K."/>
            <person name="Coutinho P.M."/>
            <person name="Henrissat B."/>
            <person name="Fulton R."/>
            <person name="Latreille P."/>
            <person name="Kim K."/>
            <person name="Wilson R.K."/>
            <person name="Gordon J.I."/>
        </authorList>
    </citation>
    <scope>NUCLEOTIDE SEQUENCE [LARGE SCALE GENOMIC DNA]</scope>
    <source>
        <strain>ATCC 35061 / DSM 861 / OCM 144 / PS</strain>
    </source>
</reference>
<keyword id="KW-0687">Ribonucleoprotein</keyword>
<keyword id="KW-0689">Ribosomal protein</keyword>
<organism>
    <name type="scientific">Methanobrevibacter smithii (strain ATCC 35061 / DSM 861 / OCM 144 / PS)</name>
    <dbReference type="NCBI Taxonomy" id="420247"/>
    <lineage>
        <taxon>Archaea</taxon>
        <taxon>Methanobacteriati</taxon>
        <taxon>Methanobacteriota</taxon>
        <taxon>Methanomada group</taxon>
        <taxon>Methanobacteria</taxon>
        <taxon>Methanobacteriales</taxon>
        <taxon>Methanobacteriaceae</taxon>
        <taxon>Methanobrevibacter</taxon>
    </lineage>
</organism>
<evidence type="ECO:0000255" key="1">
    <source>
        <dbReference type="HAMAP-Rule" id="MF_00629"/>
    </source>
</evidence>
<evidence type="ECO:0000305" key="2"/>
<gene>
    <name evidence="1" type="primary">rpl39e</name>
    <name type="ordered locus">Msm_0706</name>
</gene>